<evidence type="ECO:0000255" key="1">
    <source>
        <dbReference type="HAMAP-Rule" id="MF_00494"/>
    </source>
</evidence>
<name>TAL_RHIWR</name>
<reference key="1">
    <citation type="journal article" date="2010" name="J. Bacteriol.">
        <title>Genome sequence of the dioxin-mineralizing bacterium Sphingomonas wittichii RW1.</title>
        <authorList>
            <person name="Miller T.R."/>
            <person name="Delcher A.L."/>
            <person name="Salzberg S.L."/>
            <person name="Saunders E."/>
            <person name="Detter J.C."/>
            <person name="Halden R.U."/>
        </authorList>
    </citation>
    <scope>NUCLEOTIDE SEQUENCE [LARGE SCALE GENOMIC DNA]</scope>
    <source>
        <strain>DSM 6014 / CCUG 31198 / JCM 15750 / NBRC 105917 / EY 4224 / RW1</strain>
    </source>
</reference>
<accession>A5V2S4</accession>
<dbReference type="EC" id="2.2.1.2" evidence="1"/>
<dbReference type="EMBL" id="CP000699">
    <property type="protein sequence ID" value="ABQ66590.1"/>
    <property type="molecule type" value="Genomic_DNA"/>
</dbReference>
<dbReference type="SMR" id="A5V2S4"/>
<dbReference type="STRING" id="392499.Swit_0219"/>
<dbReference type="PaxDb" id="392499-Swit_0219"/>
<dbReference type="KEGG" id="swi:Swit_0219"/>
<dbReference type="eggNOG" id="COG0176">
    <property type="taxonomic scope" value="Bacteria"/>
</dbReference>
<dbReference type="HOGENOM" id="CLU_079764_0_0_5"/>
<dbReference type="OrthoDB" id="9807051at2"/>
<dbReference type="UniPathway" id="UPA00115">
    <property type="reaction ID" value="UER00414"/>
</dbReference>
<dbReference type="Proteomes" id="UP000001989">
    <property type="component" value="Chromosome"/>
</dbReference>
<dbReference type="GO" id="GO:0005737">
    <property type="term" value="C:cytoplasm"/>
    <property type="evidence" value="ECO:0007669"/>
    <property type="project" value="UniProtKB-SubCell"/>
</dbReference>
<dbReference type="GO" id="GO:0016832">
    <property type="term" value="F:aldehyde-lyase activity"/>
    <property type="evidence" value="ECO:0007669"/>
    <property type="project" value="InterPro"/>
</dbReference>
<dbReference type="GO" id="GO:0004801">
    <property type="term" value="F:transaldolase activity"/>
    <property type="evidence" value="ECO:0007669"/>
    <property type="project" value="UniProtKB-UniRule"/>
</dbReference>
<dbReference type="GO" id="GO:0005975">
    <property type="term" value="P:carbohydrate metabolic process"/>
    <property type="evidence" value="ECO:0007669"/>
    <property type="project" value="InterPro"/>
</dbReference>
<dbReference type="GO" id="GO:0006098">
    <property type="term" value="P:pentose-phosphate shunt"/>
    <property type="evidence" value="ECO:0007669"/>
    <property type="project" value="UniProtKB-UniRule"/>
</dbReference>
<dbReference type="CDD" id="cd00956">
    <property type="entry name" value="Transaldolase_FSA"/>
    <property type="match status" value="1"/>
</dbReference>
<dbReference type="FunFam" id="3.20.20.70:FF:000018">
    <property type="entry name" value="Probable transaldolase"/>
    <property type="match status" value="1"/>
</dbReference>
<dbReference type="Gene3D" id="3.20.20.70">
    <property type="entry name" value="Aldolase class I"/>
    <property type="match status" value="1"/>
</dbReference>
<dbReference type="HAMAP" id="MF_00494">
    <property type="entry name" value="Transaldolase_3b"/>
    <property type="match status" value="1"/>
</dbReference>
<dbReference type="InterPro" id="IPR013785">
    <property type="entry name" value="Aldolase_TIM"/>
</dbReference>
<dbReference type="InterPro" id="IPR001585">
    <property type="entry name" value="TAL/FSA"/>
</dbReference>
<dbReference type="InterPro" id="IPR022999">
    <property type="entry name" value="Transaldolase_3B"/>
</dbReference>
<dbReference type="InterPro" id="IPR004731">
    <property type="entry name" value="Transaldolase_3B/F6P_aldolase"/>
</dbReference>
<dbReference type="InterPro" id="IPR018225">
    <property type="entry name" value="Transaldolase_AS"/>
</dbReference>
<dbReference type="InterPro" id="IPR033919">
    <property type="entry name" value="TSA/FSA_arc/bac"/>
</dbReference>
<dbReference type="NCBIfam" id="TIGR00875">
    <property type="entry name" value="fsa_talC_mipB"/>
    <property type="match status" value="1"/>
</dbReference>
<dbReference type="PANTHER" id="PTHR10683:SF40">
    <property type="entry name" value="FRUCTOSE-6-PHOSPHATE ALDOLASE 1-RELATED"/>
    <property type="match status" value="1"/>
</dbReference>
<dbReference type="PANTHER" id="PTHR10683">
    <property type="entry name" value="TRANSALDOLASE"/>
    <property type="match status" value="1"/>
</dbReference>
<dbReference type="Pfam" id="PF00923">
    <property type="entry name" value="TAL_FSA"/>
    <property type="match status" value="1"/>
</dbReference>
<dbReference type="SUPFAM" id="SSF51569">
    <property type="entry name" value="Aldolase"/>
    <property type="match status" value="1"/>
</dbReference>
<dbReference type="PROSITE" id="PS01054">
    <property type="entry name" value="TRANSALDOLASE_1"/>
    <property type="match status" value="1"/>
</dbReference>
<sequence>MKFFVDTADTADIAEMAATGLLDGVTTNPSLIAKSGKQFVDVIAEICKIVPGPVSAEVVALDHATMMKEAEVLRKIADNVCIKVPLTIDGLKTCKALSDDGTMVNVTLCFSANQALLAGKAGAAFISPFVGRHDDVGLDGMGLIADIRQIYDNYDFGTEILVASVRHPIHILESAKIGADVMTAPPAVIRALFNHPLTDKGIQGFMADWAKTGQSIL</sequence>
<keyword id="KW-0963">Cytoplasm</keyword>
<keyword id="KW-0570">Pentose shunt</keyword>
<keyword id="KW-1185">Reference proteome</keyword>
<keyword id="KW-0704">Schiff base</keyword>
<keyword id="KW-0808">Transferase</keyword>
<gene>
    <name evidence="1" type="primary">tal</name>
    <name type="ordered locus">Swit_0219</name>
</gene>
<comment type="function">
    <text evidence="1">Transaldolase is important for the balance of metabolites in the pentose-phosphate pathway.</text>
</comment>
<comment type="catalytic activity">
    <reaction evidence="1">
        <text>D-sedoheptulose 7-phosphate + D-glyceraldehyde 3-phosphate = D-erythrose 4-phosphate + beta-D-fructose 6-phosphate</text>
        <dbReference type="Rhea" id="RHEA:17053"/>
        <dbReference type="ChEBI" id="CHEBI:16897"/>
        <dbReference type="ChEBI" id="CHEBI:57483"/>
        <dbReference type="ChEBI" id="CHEBI:57634"/>
        <dbReference type="ChEBI" id="CHEBI:59776"/>
        <dbReference type="EC" id="2.2.1.2"/>
    </reaction>
</comment>
<comment type="pathway">
    <text evidence="1">Carbohydrate degradation; pentose phosphate pathway; D-glyceraldehyde 3-phosphate and beta-D-fructose 6-phosphate from D-ribose 5-phosphate and D-xylulose 5-phosphate (non-oxidative stage): step 2/3.</text>
</comment>
<comment type="subcellular location">
    <subcellularLocation>
        <location evidence="1">Cytoplasm</location>
    </subcellularLocation>
</comment>
<comment type="similarity">
    <text evidence="1">Belongs to the transaldolase family. Type 3B subfamily.</text>
</comment>
<organism>
    <name type="scientific">Rhizorhabdus wittichii (strain DSM 6014 / CCUG 31198 / JCM 15750 / NBRC 105917 / EY 4224 / RW1)</name>
    <name type="common">Sphingomonas wittichii</name>
    <dbReference type="NCBI Taxonomy" id="392499"/>
    <lineage>
        <taxon>Bacteria</taxon>
        <taxon>Pseudomonadati</taxon>
        <taxon>Pseudomonadota</taxon>
        <taxon>Alphaproteobacteria</taxon>
        <taxon>Sphingomonadales</taxon>
        <taxon>Sphingomonadaceae</taxon>
        <taxon>Rhizorhabdus</taxon>
    </lineage>
</organism>
<feature type="chain" id="PRO_1000126358" description="Probable transaldolase">
    <location>
        <begin position="1"/>
        <end position="217"/>
    </location>
</feature>
<feature type="active site" description="Schiff-base intermediate with substrate" evidence="1">
    <location>
        <position position="83"/>
    </location>
</feature>
<protein>
    <recommendedName>
        <fullName evidence="1">Probable transaldolase</fullName>
        <ecNumber evidence="1">2.2.1.2</ecNumber>
    </recommendedName>
</protein>
<proteinExistence type="inferred from homology"/>